<keyword id="KW-0963">Cytoplasm</keyword>
<keyword id="KW-0378">Hydrolase</keyword>
<keyword id="KW-0479">Metal-binding</keyword>
<keyword id="KW-0547">Nucleotide-binding</keyword>
<evidence type="ECO:0000255" key="1">
    <source>
        <dbReference type="HAMAP-Rule" id="MF_00060"/>
    </source>
</evidence>
<reference key="1">
    <citation type="journal article" date="2008" name="Genome Res.">
        <title>Chlamydia trachomatis: genome sequence analysis of lymphogranuloma venereum isolates.</title>
        <authorList>
            <person name="Thomson N.R."/>
            <person name="Holden M.T.G."/>
            <person name="Carder C."/>
            <person name="Lennard N."/>
            <person name="Lockey S.J."/>
            <person name="Marsh P."/>
            <person name="Skipp P."/>
            <person name="O'Connor C.D."/>
            <person name="Goodhead I."/>
            <person name="Norbertzcak H."/>
            <person name="Harris B."/>
            <person name="Ormond D."/>
            <person name="Rance R."/>
            <person name="Quail M.A."/>
            <person name="Parkhill J."/>
            <person name="Stephens R.S."/>
            <person name="Clarke I.N."/>
        </authorList>
    </citation>
    <scope>NUCLEOTIDE SEQUENCE [LARGE SCALE GENOMIC DNA]</scope>
    <source>
        <strain>UCH-1/proctitis</strain>
    </source>
</reference>
<feature type="chain" id="PRO_1000091990" description="5'-nucleotidase SurE">
    <location>
        <begin position="1"/>
        <end position="283"/>
    </location>
</feature>
<feature type="binding site" evidence="1">
    <location>
        <position position="14"/>
    </location>
    <ligand>
        <name>a divalent metal cation</name>
        <dbReference type="ChEBI" id="CHEBI:60240"/>
    </ligand>
</feature>
<feature type="binding site" evidence="1">
    <location>
        <position position="15"/>
    </location>
    <ligand>
        <name>a divalent metal cation</name>
        <dbReference type="ChEBI" id="CHEBI:60240"/>
    </ligand>
</feature>
<feature type="binding site" evidence="1">
    <location>
        <position position="47"/>
    </location>
    <ligand>
        <name>a divalent metal cation</name>
        <dbReference type="ChEBI" id="CHEBI:60240"/>
    </ligand>
</feature>
<feature type="binding site" evidence="1">
    <location>
        <position position="105"/>
    </location>
    <ligand>
        <name>a divalent metal cation</name>
        <dbReference type="ChEBI" id="CHEBI:60240"/>
    </ligand>
</feature>
<organism>
    <name type="scientific">Chlamydia trachomatis serovar L2b (strain UCH-1/proctitis)</name>
    <dbReference type="NCBI Taxonomy" id="471473"/>
    <lineage>
        <taxon>Bacteria</taxon>
        <taxon>Pseudomonadati</taxon>
        <taxon>Chlamydiota</taxon>
        <taxon>Chlamydiia</taxon>
        <taxon>Chlamydiales</taxon>
        <taxon>Chlamydiaceae</taxon>
        <taxon>Chlamydia/Chlamydophila group</taxon>
        <taxon>Chlamydia</taxon>
    </lineage>
</organism>
<name>SURE_CHLTB</name>
<gene>
    <name evidence="1" type="primary">surE</name>
    <name type="ordered locus">CTLon_0465</name>
</gene>
<proteinExistence type="inferred from homology"/>
<dbReference type="EC" id="3.1.3.5" evidence="1"/>
<dbReference type="EMBL" id="AM884177">
    <property type="protein sequence ID" value="CAP06863.1"/>
    <property type="molecule type" value="Genomic_DNA"/>
</dbReference>
<dbReference type="RefSeq" id="WP_009873647.1">
    <property type="nucleotide sequence ID" value="NC_010280.2"/>
</dbReference>
<dbReference type="SMR" id="B0BBJ8"/>
<dbReference type="KEGG" id="ctl:CTLon_0465"/>
<dbReference type="HOGENOM" id="CLU_045192_1_0_0"/>
<dbReference type="Proteomes" id="UP001154401">
    <property type="component" value="Chromosome"/>
</dbReference>
<dbReference type="GO" id="GO:0005737">
    <property type="term" value="C:cytoplasm"/>
    <property type="evidence" value="ECO:0007669"/>
    <property type="project" value="UniProtKB-SubCell"/>
</dbReference>
<dbReference type="GO" id="GO:0008254">
    <property type="term" value="F:3'-nucleotidase activity"/>
    <property type="evidence" value="ECO:0007669"/>
    <property type="project" value="TreeGrafter"/>
</dbReference>
<dbReference type="GO" id="GO:0008253">
    <property type="term" value="F:5'-nucleotidase activity"/>
    <property type="evidence" value="ECO:0007669"/>
    <property type="project" value="UniProtKB-UniRule"/>
</dbReference>
<dbReference type="GO" id="GO:0004309">
    <property type="term" value="F:exopolyphosphatase activity"/>
    <property type="evidence" value="ECO:0007669"/>
    <property type="project" value="TreeGrafter"/>
</dbReference>
<dbReference type="GO" id="GO:0046872">
    <property type="term" value="F:metal ion binding"/>
    <property type="evidence" value="ECO:0007669"/>
    <property type="project" value="UniProtKB-UniRule"/>
</dbReference>
<dbReference type="GO" id="GO:0000166">
    <property type="term" value="F:nucleotide binding"/>
    <property type="evidence" value="ECO:0007669"/>
    <property type="project" value="UniProtKB-KW"/>
</dbReference>
<dbReference type="FunFam" id="3.40.1210.10:FF:000004">
    <property type="entry name" value="5'-nucleotidase SurE"/>
    <property type="match status" value="1"/>
</dbReference>
<dbReference type="Gene3D" id="3.40.1210.10">
    <property type="entry name" value="Survival protein SurE-like phosphatase/nucleotidase"/>
    <property type="match status" value="1"/>
</dbReference>
<dbReference type="HAMAP" id="MF_00060">
    <property type="entry name" value="SurE"/>
    <property type="match status" value="1"/>
</dbReference>
<dbReference type="InterPro" id="IPR030048">
    <property type="entry name" value="SurE"/>
</dbReference>
<dbReference type="InterPro" id="IPR002828">
    <property type="entry name" value="SurE-like_Pase/nucleotidase"/>
</dbReference>
<dbReference type="InterPro" id="IPR036523">
    <property type="entry name" value="SurE-like_sf"/>
</dbReference>
<dbReference type="NCBIfam" id="NF001493">
    <property type="entry name" value="PRK00346.2-3"/>
    <property type="match status" value="1"/>
</dbReference>
<dbReference type="NCBIfam" id="TIGR00087">
    <property type="entry name" value="surE"/>
    <property type="match status" value="1"/>
</dbReference>
<dbReference type="PANTHER" id="PTHR30457">
    <property type="entry name" value="5'-NUCLEOTIDASE SURE"/>
    <property type="match status" value="1"/>
</dbReference>
<dbReference type="PANTHER" id="PTHR30457:SF12">
    <property type="entry name" value="5'_3'-NUCLEOTIDASE SURE"/>
    <property type="match status" value="1"/>
</dbReference>
<dbReference type="Pfam" id="PF01975">
    <property type="entry name" value="SurE"/>
    <property type="match status" value="1"/>
</dbReference>
<dbReference type="SUPFAM" id="SSF64167">
    <property type="entry name" value="SurE-like"/>
    <property type="match status" value="1"/>
</dbReference>
<comment type="function">
    <text evidence="1">Nucleotidase that shows phosphatase activity on nucleoside 5'-monophosphates.</text>
</comment>
<comment type="catalytic activity">
    <reaction evidence="1">
        <text>a ribonucleoside 5'-phosphate + H2O = a ribonucleoside + phosphate</text>
        <dbReference type="Rhea" id="RHEA:12484"/>
        <dbReference type="ChEBI" id="CHEBI:15377"/>
        <dbReference type="ChEBI" id="CHEBI:18254"/>
        <dbReference type="ChEBI" id="CHEBI:43474"/>
        <dbReference type="ChEBI" id="CHEBI:58043"/>
        <dbReference type="EC" id="3.1.3.5"/>
    </reaction>
</comment>
<comment type="cofactor">
    <cofactor evidence="1">
        <name>a divalent metal cation</name>
        <dbReference type="ChEBI" id="CHEBI:60240"/>
    </cofactor>
    <text evidence="1">Binds 1 divalent metal cation per subunit.</text>
</comment>
<comment type="subcellular location">
    <subcellularLocation>
        <location evidence="1">Cytoplasm</location>
    </subcellularLocation>
</comment>
<comment type="similarity">
    <text evidence="1">Belongs to the SurE nucleotidase family.</text>
</comment>
<accession>B0BBJ8</accession>
<protein>
    <recommendedName>
        <fullName evidence="1">5'-nucleotidase SurE</fullName>
        <ecNumber evidence="1">3.1.3.5</ecNumber>
    </recommendedName>
    <alternativeName>
        <fullName evidence="1">Nucleoside 5'-monophosphate phosphohydrolase</fullName>
    </alternativeName>
</protein>
<sequence length="283" mass="31516">MTETRRLRILITNDDGIKAKGISLLISLLREADFADLYVVAPLEEQSGRSMAFSLVEPTALEPFDYPQRVQEAWAVTGTPVDCVKLAIGELFKENALDLILSGINNGKNSGRCLYYSATVGAIREANLHGIPAIALSQSENIAFFQEAHMASLIRSLCEFTVAYKHTDPLGLNVNFPASADDSPWKGIRFTLSGNEFLFGIPRLVRTEGNRRYYTLYDMRDKVSEEFSEEYLALANNYISAAPLVSKNTPRATLSEEELAFLKDSFEQSVLWKASLNLEEDLA</sequence>